<sequence length="484" mass="50665">MTKEQQLAERIIAAVGGMDNIDSVMNCMTRVRIKVLDENKVDDQELRHIDGVMGVIHDERIQVVVGPGTVNKVANHMAELSGVKLGDPIPHHHNDSEKMDYKSYAADKAKANKEAHKAKQKNGKLNKVLKSIANIFIPLIPAFIGAGLIGGIAAVLSNLMVAGYISGAWITQLITVFNVIKDGMLAYLAIFTGINAAKEFGATPGLGGVIGGTTLLTGIAGKNILMNVFTGEPLQPGQGGIIGVIFAVWILSIVEKRLHKIVPNAIDIIVTPTIALLIVGLLTIFIFMPLAGFVSDSLVSVVNGIISIGGVFSGFIIGASFLPLVMLGLHHIFTPIHIEMINQSGATYLLPIAAMAGAGQVGAALALWVRCKRNTTLRNTLKGALPVGFLGIGEPLIYGVTLPLGRPFLTACIGGGIGGAVIGGIGHIGAKAIGPSGVSLLPLISDNMYLGYIAGLLAAYAGGFVCTYLFGTTKAMRQTDLLGD</sequence>
<keyword id="KW-1003">Cell membrane</keyword>
<keyword id="KW-0418">Kinase</keyword>
<keyword id="KW-0472">Membrane</keyword>
<keyword id="KW-0598">Phosphotransferase system</keyword>
<keyword id="KW-0762">Sugar transport</keyword>
<keyword id="KW-0808">Transferase</keyword>
<keyword id="KW-0812">Transmembrane</keyword>
<keyword id="KW-1133">Transmembrane helix</keyword>
<keyword id="KW-0813">Transport</keyword>
<proteinExistence type="inferred from homology"/>
<organism>
    <name type="scientific">Staphylococcus aureus (strain MSSA476)</name>
    <dbReference type="NCBI Taxonomy" id="282459"/>
    <lineage>
        <taxon>Bacteria</taxon>
        <taxon>Bacillati</taxon>
        <taxon>Bacillota</taxon>
        <taxon>Bacilli</taxon>
        <taxon>Bacillales</taxon>
        <taxon>Staphylococcaceae</taxon>
        <taxon>Staphylococcus</taxon>
    </lineage>
</organism>
<dbReference type="EC" id="2.7.1.-" evidence="1"/>
<dbReference type="EMBL" id="BX571857">
    <property type="protein sequence ID" value="CAG41935.1"/>
    <property type="molecule type" value="Genomic_DNA"/>
</dbReference>
<dbReference type="RefSeq" id="WP_000159750.1">
    <property type="nucleotide sequence ID" value="NC_002953.3"/>
</dbReference>
<dbReference type="SMR" id="Q6GCT4"/>
<dbReference type="KEGG" id="sas:SAS0167"/>
<dbReference type="HOGENOM" id="CLU_012312_2_0_9"/>
<dbReference type="UniPathway" id="UPA00544"/>
<dbReference type="GO" id="GO:0005886">
    <property type="term" value="C:plasma membrane"/>
    <property type="evidence" value="ECO:0007669"/>
    <property type="project" value="UniProtKB-SubCell"/>
</dbReference>
<dbReference type="GO" id="GO:0016301">
    <property type="term" value="F:kinase activity"/>
    <property type="evidence" value="ECO:0007669"/>
    <property type="project" value="UniProtKB-KW"/>
</dbReference>
<dbReference type="GO" id="GO:0008982">
    <property type="term" value="F:protein-N(PI)-phosphohistidine-sugar phosphotransferase activity"/>
    <property type="evidence" value="ECO:0007669"/>
    <property type="project" value="InterPro"/>
</dbReference>
<dbReference type="GO" id="GO:0090588">
    <property type="term" value="F:protein-phosphocysteine-N-acetylmuramate phosphotransferase system transporter activity"/>
    <property type="evidence" value="ECO:0007669"/>
    <property type="project" value="TreeGrafter"/>
</dbReference>
<dbReference type="GO" id="GO:0009254">
    <property type="term" value="P:peptidoglycan turnover"/>
    <property type="evidence" value="ECO:0007669"/>
    <property type="project" value="UniProtKB-UniPathway"/>
</dbReference>
<dbReference type="GO" id="GO:0009401">
    <property type="term" value="P:phosphoenolpyruvate-dependent sugar phosphotransferase system"/>
    <property type="evidence" value="ECO:0007669"/>
    <property type="project" value="UniProtKB-KW"/>
</dbReference>
<dbReference type="CDD" id="cd00212">
    <property type="entry name" value="PTS_IIB_glc"/>
    <property type="match status" value="1"/>
</dbReference>
<dbReference type="FunFam" id="3.30.1360.60:FF:000001">
    <property type="entry name" value="PTS system glucose-specific IIBC component PtsG"/>
    <property type="match status" value="1"/>
</dbReference>
<dbReference type="Gene3D" id="3.30.1360.60">
    <property type="entry name" value="Glucose permease domain IIB"/>
    <property type="match status" value="1"/>
</dbReference>
<dbReference type="InterPro" id="IPR036878">
    <property type="entry name" value="Glu_permease_IIB"/>
</dbReference>
<dbReference type="InterPro" id="IPR018113">
    <property type="entry name" value="PTrfase_EIIB_Cys"/>
</dbReference>
<dbReference type="InterPro" id="IPR003352">
    <property type="entry name" value="PTS_EIIC"/>
</dbReference>
<dbReference type="InterPro" id="IPR013013">
    <property type="entry name" value="PTS_EIIC_1"/>
</dbReference>
<dbReference type="InterPro" id="IPR001996">
    <property type="entry name" value="PTS_IIB_1"/>
</dbReference>
<dbReference type="InterPro" id="IPR050558">
    <property type="entry name" value="PTS_Sugar-Specific_Components"/>
</dbReference>
<dbReference type="PANTHER" id="PTHR30175">
    <property type="entry name" value="PHOSPHOTRANSFERASE SYSTEM TRANSPORT PROTEIN"/>
    <property type="match status" value="1"/>
</dbReference>
<dbReference type="PANTHER" id="PTHR30175:SF3">
    <property type="entry name" value="PTS SYSTEM N-ACETYLMURAMIC ACID-SPECIFIC EIIBC COMPONENT"/>
    <property type="match status" value="1"/>
</dbReference>
<dbReference type="Pfam" id="PF00367">
    <property type="entry name" value="PTS_EIIB"/>
    <property type="match status" value="1"/>
</dbReference>
<dbReference type="Pfam" id="PF02378">
    <property type="entry name" value="PTS_EIIC"/>
    <property type="match status" value="1"/>
</dbReference>
<dbReference type="SUPFAM" id="SSF55604">
    <property type="entry name" value="Glucose permease domain IIB"/>
    <property type="match status" value="1"/>
</dbReference>
<dbReference type="PROSITE" id="PS51098">
    <property type="entry name" value="PTS_EIIB_TYPE_1"/>
    <property type="match status" value="1"/>
</dbReference>
<dbReference type="PROSITE" id="PS01035">
    <property type="entry name" value="PTS_EIIB_TYPE_1_CYS"/>
    <property type="match status" value="1"/>
</dbReference>
<dbReference type="PROSITE" id="PS51103">
    <property type="entry name" value="PTS_EIIC_TYPE_1"/>
    <property type="match status" value="1"/>
</dbReference>
<protein>
    <recommendedName>
        <fullName evidence="1">PTS system MurNAc-GlcNAc-specific EIIBC component</fullName>
    </recommendedName>
    <domain>
        <recommendedName>
            <fullName>MurNAc-GlcNAc-specific phosphotransferase enzyme IIB component</fullName>
            <ecNumber evidence="1">2.7.1.-</ecNumber>
        </recommendedName>
        <alternativeName>
            <fullName>PTS system MurNAc-GlcNAc-specific EIIB component</fullName>
        </alternativeName>
    </domain>
    <domain>
        <recommendedName>
            <fullName>MurNAc-GlcNAc permease IIC component</fullName>
        </recommendedName>
        <alternativeName>
            <fullName>PTS system MurNAc-GlcNAc-specific EIIC component</fullName>
        </alternativeName>
    </domain>
</protein>
<accession>Q6GCT4</accession>
<evidence type="ECO:0000250" key="1">
    <source>
        <dbReference type="UniProtKB" id="Q2FK70"/>
    </source>
</evidence>
<evidence type="ECO:0000255" key="2">
    <source>
        <dbReference type="PROSITE-ProRule" id="PRU00421"/>
    </source>
</evidence>
<evidence type="ECO:0000255" key="3">
    <source>
        <dbReference type="PROSITE-ProRule" id="PRU00426"/>
    </source>
</evidence>
<feature type="chain" id="PRO_0000272179" description="PTS system MurNAc-GlcNAc-specific EIIBC component">
    <location>
        <begin position="1"/>
        <end position="484"/>
    </location>
</feature>
<feature type="transmembrane region" description="Helical" evidence="3">
    <location>
        <begin position="135"/>
        <end position="155"/>
    </location>
</feature>
<feature type="transmembrane region" description="Helical" evidence="3">
    <location>
        <begin position="160"/>
        <end position="180"/>
    </location>
</feature>
<feature type="transmembrane region" description="Helical" evidence="3">
    <location>
        <begin position="200"/>
        <end position="220"/>
    </location>
</feature>
<feature type="transmembrane region" description="Helical" evidence="3">
    <location>
        <begin position="234"/>
        <end position="254"/>
    </location>
</feature>
<feature type="transmembrane region" description="Helical" evidence="3">
    <location>
        <begin position="274"/>
        <end position="294"/>
    </location>
</feature>
<feature type="transmembrane region" description="Helical" evidence="3">
    <location>
        <begin position="305"/>
        <end position="325"/>
    </location>
</feature>
<feature type="transmembrane region" description="Helical" evidence="3">
    <location>
        <begin position="349"/>
        <end position="369"/>
    </location>
</feature>
<feature type="transmembrane region" description="Helical" evidence="3">
    <location>
        <begin position="384"/>
        <end position="404"/>
    </location>
</feature>
<feature type="transmembrane region" description="Helical" evidence="3">
    <location>
        <begin position="408"/>
        <end position="428"/>
    </location>
</feature>
<feature type="transmembrane region" description="Helical" evidence="3">
    <location>
        <begin position="450"/>
        <end position="470"/>
    </location>
</feature>
<feature type="domain" description="PTS EIIB type-1" evidence="2">
    <location>
        <begin position="5"/>
        <end position="87"/>
    </location>
</feature>
<feature type="domain" description="PTS EIIC type-1" evidence="3">
    <location>
        <begin position="130"/>
        <end position="484"/>
    </location>
</feature>
<feature type="active site" description="Phosphocysteine intermediate; for EIIB activity" evidence="2">
    <location>
        <position position="27"/>
    </location>
</feature>
<name>PTXBC_STAAS</name>
<reference key="1">
    <citation type="journal article" date="2004" name="Proc. Natl. Acad. Sci. U.S.A.">
        <title>Complete genomes of two clinical Staphylococcus aureus strains: evidence for the rapid evolution of virulence and drug resistance.</title>
        <authorList>
            <person name="Holden M.T.G."/>
            <person name="Feil E.J."/>
            <person name="Lindsay J.A."/>
            <person name="Peacock S.J."/>
            <person name="Day N.P.J."/>
            <person name="Enright M.C."/>
            <person name="Foster T.J."/>
            <person name="Moore C.E."/>
            <person name="Hurst L."/>
            <person name="Atkin R."/>
            <person name="Barron A."/>
            <person name="Bason N."/>
            <person name="Bentley S.D."/>
            <person name="Chillingworth C."/>
            <person name="Chillingworth T."/>
            <person name="Churcher C."/>
            <person name="Clark L."/>
            <person name="Corton C."/>
            <person name="Cronin A."/>
            <person name="Doggett J."/>
            <person name="Dowd L."/>
            <person name="Feltwell T."/>
            <person name="Hance Z."/>
            <person name="Harris B."/>
            <person name="Hauser H."/>
            <person name="Holroyd S."/>
            <person name="Jagels K."/>
            <person name="James K.D."/>
            <person name="Lennard N."/>
            <person name="Line A."/>
            <person name="Mayes R."/>
            <person name="Moule S."/>
            <person name="Mungall K."/>
            <person name="Ormond D."/>
            <person name="Quail M.A."/>
            <person name="Rabbinowitsch E."/>
            <person name="Rutherford K.M."/>
            <person name="Sanders M."/>
            <person name="Sharp S."/>
            <person name="Simmonds M."/>
            <person name="Stevens K."/>
            <person name="Whitehead S."/>
            <person name="Barrell B.G."/>
            <person name="Spratt B.G."/>
            <person name="Parkhill J."/>
        </authorList>
    </citation>
    <scope>NUCLEOTIDE SEQUENCE [LARGE SCALE GENOMIC DNA]</scope>
    <source>
        <strain>MSSA476</strain>
    </source>
</reference>
<gene>
    <name type="ordered locus">SAS0167</name>
</gene>
<comment type="function">
    <text evidence="1">The phosphoenolpyruvate-dependent sugar phosphotransferase system (sugar PTS), a major carbohydrate active transport system, catalyzes the phosphorylation of incoming sugar substrates concomitantly with their translocation across the cell membrane. This system is involved in the uptake and phosphorylation of MurNAc-GlcNAc, the principle peptidoglycan turnover product of S.aureus, yielding cytoplasmic MurNAc 6P-GlcNAc.</text>
</comment>
<comment type="catalytic activity">
    <reaction evidence="1">
        <text>N-acetyl-beta-D-muramate-(1-&gt;4)-N-acetyl-D-glucosamine(out) + N(pros)-phospho-L-histidyl-[protein] = 6-phospho-N-acetyl-beta-D-muramate-(1-&gt;4)-N-acetyl-D-glucosamine(in) + L-histidyl-[protein]</text>
        <dbReference type="Rhea" id="RHEA:66784"/>
        <dbReference type="Rhea" id="RHEA-COMP:9745"/>
        <dbReference type="Rhea" id="RHEA-COMP:9746"/>
        <dbReference type="ChEBI" id="CHEBI:29979"/>
        <dbReference type="ChEBI" id="CHEBI:64837"/>
        <dbReference type="ChEBI" id="CHEBI:167476"/>
        <dbReference type="ChEBI" id="CHEBI:167477"/>
    </reaction>
    <physiologicalReaction direction="left-to-right" evidence="1">
        <dbReference type="Rhea" id="RHEA:66785"/>
    </physiologicalReaction>
</comment>
<comment type="pathway">
    <text evidence="1">Cell wall biogenesis; peptidoglycan recycling.</text>
</comment>
<comment type="subcellular location">
    <subcellularLocation>
        <location evidence="3">Cell membrane</location>
        <topology evidence="3">Multi-pass membrane protein</topology>
    </subcellularLocation>
</comment>
<comment type="domain">
    <text>The EIIB domain is phosphorylated by phospho-EIIA on a cysteinyl or histidyl residue, depending on the transported sugar. Then, it transfers the phosphoryl group to the sugar substrate concomitantly with the sugar uptake processed by the EIIC domain.</text>
</comment>
<comment type="domain">
    <text>The EIIC domain forms the PTS system translocation channel and contains the specific substrate-binding site.</text>
</comment>